<accession>Q9KRA3</accession>
<accession>Q9KRA4</accession>
<name>FABV1_VIBCH</name>
<evidence type="ECO:0000255" key="1">
    <source>
        <dbReference type="HAMAP-Rule" id="MF_01838"/>
    </source>
</evidence>
<evidence type="ECO:0000269" key="2">
    <source>
    </source>
</evidence>
<evidence type="ECO:0000303" key="3">
    <source>
    </source>
</evidence>
<evidence type="ECO:0000305" key="4"/>
<reference key="1">
    <citation type="journal article" date="2000" name="Nature">
        <title>DNA sequence of both chromosomes of the cholera pathogen Vibrio cholerae.</title>
        <authorList>
            <person name="Heidelberg J.F."/>
            <person name="Eisen J.A."/>
            <person name="Nelson W.C."/>
            <person name="Clayton R.A."/>
            <person name="Gwinn M.L."/>
            <person name="Dodson R.J."/>
            <person name="Haft D.H."/>
            <person name="Hickey E.K."/>
            <person name="Peterson J.D."/>
            <person name="Umayam L.A."/>
            <person name="Gill S.R."/>
            <person name="Nelson K.E."/>
            <person name="Read T.D."/>
            <person name="Tettelin H."/>
            <person name="Richardson D.L."/>
            <person name="Ermolaeva M.D."/>
            <person name="Vamathevan J.J."/>
            <person name="Bass S."/>
            <person name="Qin H."/>
            <person name="Dragoi I."/>
            <person name="Sellers P."/>
            <person name="McDonald L.A."/>
            <person name="Utterback T.R."/>
            <person name="Fleischmann R.D."/>
            <person name="Nierman W.C."/>
            <person name="White O."/>
            <person name="Salzberg S.L."/>
            <person name="Smith H.O."/>
            <person name="Colwell R.R."/>
            <person name="Mekalanos J.J."/>
            <person name="Venter J.C."/>
            <person name="Fraser C.M."/>
        </authorList>
    </citation>
    <scope>NUCLEOTIDE SEQUENCE [LARGE SCALE GENOMIC DNA]</scope>
    <source>
        <strain>ATCC 39315 / El Tor Inaba N16961</strain>
    </source>
</reference>
<reference key="2">
    <citation type="journal article" date="2008" name="J. Biol. Chem.">
        <title>Vibrio cholerae FabV defines a new class of enoyl-acyl carrier protein reductase.</title>
        <authorList>
            <person name="Massengo-Tiasse R.P."/>
            <person name="Cronan J.E."/>
        </authorList>
    </citation>
    <scope>FUNCTION</scope>
    <scope>CATALYTIC ACTIVITY</scope>
    <scope>BIOPHYSICOCHEMICAL PROPERTIES</scope>
    <scope>ACTIVITY REGULATION</scope>
    <scope>SUBSTRATE SPECIFICITY</scope>
    <scope>SUBUNIT</scope>
</reference>
<gene>
    <name evidence="3" type="primary">fabV</name>
    <name type="ordered locus">VC_1738/VC_1739</name>
</gene>
<comment type="function">
    <text evidence="2">Involved in the final reduction of the elongation cycle of fatty acid synthesis (FAS II). Catalyzes the NADH-dependent reduction of a carbon-carbon double bond in an enoyl moiety that is covalently linked to an acyl carrier protein (ACP). It can use both crotonyl-CoA and crotonyl-ACP.</text>
</comment>
<comment type="catalytic activity">
    <reaction evidence="2">
        <text>a 2,3-saturated acyl-[ACP] + NAD(+) = a (2E)-enoyl-[ACP] + NADH + H(+)</text>
        <dbReference type="Rhea" id="RHEA:10240"/>
        <dbReference type="Rhea" id="RHEA-COMP:9925"/>
        <dbReference type="Rhea" id="RHEA-COMP:9926"/>
        <dbReference type="ChEBI" id="CHEBI:15378"/>
        <dbReference type="ChEBI" id="CHEBI:57540"/>
        <dbReference type="ChEBI" id="CHEBI:57945"/>
        <dbReference type="ChEBI" id="CHEBI:78784"/>
        <dbReference type="ChEBI" id="CHEBI:78785"/>
        <dbReference type="EC" id="1.3.1.9"/>
    </reaction>
</comment>
<comment type="catalytic activity">
    <reaction evidence="2">
        <text>a 2,3-saturated acyl-CoA + NAD(+) = a (2E)-enoyl-CoA + NADH + H(+)</text>
        <dbReference type="Rhea" id="RHEA:18177"/>
        <dbReference type="ChEBI" id="CHEBI:15378"/>
        <dbReference type="ChEBI" id="CHEBI:57540"/>
        <dbReference type="ChEBI" id="CHEBI:57945"/>
        <dbReference type="ChEBI" id="CHEBI:58856"/>
        <dbReference type="ChEBI" id="CHEBI:65111"/>
        <dbReference type="EC" id="1.3.1.44"/>
    </reaction>
</comment>
<comment type="catalytic activity">
    <reaction evidence="2">
        <text>(2E)-butenoyl-[ACP] + NADH + H(+) = butanoyl-[ACP] + NAD(+)</text>
        <dbReference type="Rhea" id="RHEA:54868"/>
        <dbReference type="Rhea" id="RHEA-COMP:9627"/>
        <dbReference type="Rhea" id="RHEA-COMP:9628"/>
        <dbReference type="ChEBI" id="CHEBI:15378"/>
        <dbReference type="ChEBI" id="CHEBI:57540"/>
        <dbReference type="ChEBI" id="CHEBI:57945"/>
        <dbReference type="ChEBI" id="CHEBI:78453"/>
        <dbReference type="ChEBI" id="CHEBI:78454"/>
    </reaction>
    <physiologicalReaction direction="left-to-right" evidence="2">
        <dbReference type="Rhea" id="RHEA:54869"/>
    </physiologicalReaction>
</comment>
<comment type="catalytic activity">
    <reaction evidence="2">
        <text>butanoyl-CoA + NAD(+) = (2E)-butenoyl-CoA + NADH + H(+)</text>
        <dbReference type="Rhea" id="RHEA:52572"/>
        <dbReference type="ChEBI" id="CHEBI:15378"/>
        <dbReference type="ChEBI" id="CHEBI:57332"/>
        <dbReference type="ChEBI" id="CHEBI:57371"/>
        <dbReference type="ChEBI" id="CHEBI:57540"/>
        <dbReference type="ChEBI" id="CHEBI:57945"/>
    </reaction>
    <physiologicalReaction direction="right-to-left" evidence="2">
        <dbReference type="Rhea" id="RHEA:52574"/>
    </physiologicalReaction>
</comment>
<comment type="activity regulation">
    <text evidence="2">Weakly inhibited by triclosan.</text>
</comment>
<comment type="biophysicochemical properties">
    <kinetics>
        <KM evidence="2">195 uM for crotonyl-ACP</KM>
        <KM evidence="2">1178 uM for crotonyl-CoA</KM>
    </kinetics>
</comment>
<comment type="pathway">
    <text evidence="4">Lipid metabolism; fatty acid biosynthesis.</text>
</comment>
<comment type="subunit">
    <text evidence="2">Monomer.</text>
</comment>
<comment type="similarity">
    <text evidence="4">Belongs to the TER reductase family.</text>
</comment>
<comment type="sequence caution" evidence="4">
    <conflict type="frameshift">
        <sequence resource="EMBL-CDS" id="AAF94889"/>
    </conflict>
</comment>
<organism>
    <name type="scientific">Vibrio cholerae serotype O1 (strain ATCC 39315 / El Tor Inaba N16961)</name>
    <dbReference type="NCBI Taxonomy" id="243277"/>
    <lineage>
        <taxon>Bacteria</taxon>
        <taxon>Pseudomonadati</taxon>
        <taxon>Pseudomonadota</taxon>
        <taxon>Gammaproteobacteria</taxon>
        <taxon>Vibrionales</taxon>
        <taxon>Vibrionaceae</taxon>
        <taxon>Vibrio</taxon>
    </lineage>
</organism>
<feature type="chain" id="PRO_0000220052" description="Enoyl-[acyl-carrier-protein] reductase [NADH] 1">
    <location>
        <begin position="1"/>
        <end position="401"/>
    </location>
</feature>
<feature type="active site" description="Proton donor" evidence="1">
    <location>
        <position position="235"/>
    </location>
</feature>
<feature type="binding site" evidence="1">
    <location>
        <begin position="48"/>
        <end position="53"/>
    </location>
    <ligand>
        <name>NAD(+)</name>
        <dbReference type="ChEBI" id="CHEBI:57540"/>
    </ligand>
</feature>
<feature type="binding site" evidence="1">
    <location>
        <begin position="74"/>
        <end position="75"/>
    </location>
    <ligand>
        <name>NAD(+)</name>
        <dbReference type="ChEBI" id="CHEBI:57540"/>
    </ligand>
</feature>
<feature type="binding site" evidence="1">
    <location>
        <begin position="111"/>
        <end position="112"/>
    </location>
    <ligand>
        <name>NAD(+)</name>
        <dbReference type="ChEBI" id="CHEBI:57540"/>
    </ligand>
</feature>
<feature type="binding site" evidence="1">
    <location>
        <begin position="139"/>
        <end position="140"/>
    </location>
    <ligand>
        <name>NAD(+)</name>
        <dbReference type="ChEBI" id="CHEBI:57540"/>
    </ligand>
</feature>
<feature type="binding site" evidence="1">
    <location>
        <position position="225"/>
    </location>
    <ligand>
        <name>substrate</name>
    </ligand>
</feature>
<feature type="binding site" evidence="1">
    <location>
        <position position="244"/>
    </location>
    <ligand>
        <name>NAD(+)</name>
        <dbReference type="ChEBI" id="CHEBI:57540"/>
    </ligand>
</feature>
<feature type="binding site" evidence="1">
    <location>
        <begin position="273"/>
        <end position="275"/>
    </location>
    <ligand>
        <name>NAD(+)</name>
        <dbReference type="ChEBI" id="CHEBI:57540"/>
    </ligand>
</feature>
<feature type="site" description="Plays an important role in discriminating NADH against NADPH" evidence="1">
    <location>
        <position position="75"/>
    </location>
</feature>
<keyword id="KW-0275">Fatty acid biosynthesis</keyword>
<keyword id="KW-0276">Fatty acid metabolism</keyword>
<keyword id="KW-0444">Lipid biosynthesis</keyword>
<keyword id="KW-0443">Lipid metabolism</keyword>
<keyword id="KW-0520">NAD</keyword>
<keyword id="KW-0560">Oxidoreductase</keyword>
<keyword id="KW-1185">Reference proteome</keyword>
<protein>
    <recommendedName>
        <fullName evidence="3">Enoyl-[acyl-carrier-protein] reductase [NADH] 1</fullName>
        <shortName evidence="3">ENR 1</shortName>
        <ecNumber evidence="2">1.3.1.9</ecNumber>
    </recommendedName>
    <alternativeName>
        <fullName evidence="3">Trans-2-enoyl-CoA reductase [NADH]</fullName>
        <shortName evidence="3">TER</shortName>
        <ecNumber evidence="2">1.3.1.44</ecNumber>
    </alternativeName>
</protein>
<dbReference type="EC" id="1.3.1.9" evidence="2"/>
<dbReference type="EC" id="1.3.1.44" evidence="2"/>
<dbReference type="EMBL" id="AE003852">
    <property type="protein sequence ID" value="AAF94888.1"/>
    <property type="status" value="ALT_FRAME"/>
    <property type="molecule type" value="Genomic_DNA"/>
</dbReference>
<dbReference type="EMBL" id="AE003852">
    <property type="protein sequence ID" value="AAF94889.1"/>
    <property type="status" value="ALT_FRAME"/>
    <property type="molecule type" value="Genomic_DNA"/>
</dbReference>
<dbReference type="PIR" id="B82164">
    <property type="entry name" value="B82164"/>
</dbReference>
<dbReference type="PIR" id="C82164">
    <property type="entry name" value="C82164"/>
</dbReference>
<dbReference type="RefSeq" id="WP_000584512.1">
    <property type="nucleotide sequence ID" value="NZ_LT906614.1"/>
</dbReference>
<dbReference type="SMR" id="Q9KRA3"/>
<dbReference type="STRING" id="243277.VC_1738"/>
<dbReference type="SwissLipids" id="SLP:000001777"/>
<dbReference type="DNASU" id="2613743"/>
<dbReference type="EnsemblBacteria" id="AAF94888">
    <property type="protein sequence ID" value="AAF94888"/>
    <property type="gene ID" value="VC_1738"/>
</dbReference>
<dbReference type="EnsemblBacteria" id="AAF94889">
    <property type="protein sequence ID" value="AAF94889"/>
    <property type="gene ID" value="VC_1739"/>
</dbReference>
<dbReference type="GeneID" id="89514645"/>
<dbReference type="KEGG" id="vch:VC_1738"/>
<dbReference type="KEGG" id="vch:VC_1739"/>
<dbReference type="eggNOG" id="COG3007">
    <property type="taxonomic scope" value="Bacteria"/>
</dbReference>
<dbReference type="HOGENOM" id="CLU_057698_0_0_6"/>
<dbReference type="SABIO-RK" id="Q9KRA3"/>
<dbReference type="UniPathway" id="UPA00094"/>
<dbReference type="Proteomes" id="UP000000584">
    <property type="component" value="Chromosome 1"/>
</dbReference>
<dbReference type="GO" id="GO:0004318">
    <property type="term" value="F:enoyl-[acyl-carrier-protein] reductase (NADH) activity"/>
    <property type="evidence" value="ECO:0000314"/>
    <property type="project" value="UniProtKB"/>
</dbReference>
<dbReference type="GO" id="GO:0051287">
    <property type="term" value="F:NAD binding"/>
    <property type="evidence" value="ECO:0000314"/>
    <property type="project" value="UniProtKB"/>
</dbReference>
<dbReference type="GO" id="GO:0050343">
    <property type="term" value="F:trans-2-enoyl-CoA reductase (NADH) activity"/>
    <property type="evidence" value="ECO:0000314"/>
    <property type="project" value="UniProtKB"/>
</dbReference>
<dbReference type="GO" id="GO:0006633">
    <property type="term" value="P:fatty acid biosynthetic process"/>
    <property type="evidence" value="ECO:0000314"/>
    <property type="project" value="UniProtKB"/>
</dbReference>
<dbReference type="FunFam" id="3.40.50.720:FF:000221">
    <property type="entry name" value="Enoyl-[acyl-carrier-protein] reductase [NADH]"/>
    <property type="match status" value="1"/>
</dbReference>
<dbReference type="Gene3D" id="3.40.50.720">
    <property type="entry name" value="NAD(P)-binding Rossmann-like Domain"/>
    <property type="match status" value="1"/>
</dbReference>
<dbReference type="HAMAP" id="MF_01838">
    <property type="entry name" value="FabV_reductase"/>
    <property type="match status" value="1"/>
</dbReference>
<dbReference type="InterPro" id="IPR024906">
    <property type="entry name" value="Eno_Rdtase_FAD-bd_dom"/>
</dbReference>
<dbReference type="InterPro" id="IPR024910">
    <property type="entry name" value="Enoyl-CoA_Rdtase_cat_dom"/>
</dbReference>
<dbReference type="InterPro" id="IPR050048">
    <property type="entry name" value="FabV-like_NADH_b"/>
</dbReference>
<dbReference type="InterPro" id="IPR010758">
    <property type="entry name" value="Trans-2-enoyl-CoA_reductase"/>
</dbReference>
<dbReference type="NCBIfam" id="NF043048">
    <property type="entry name" value="EnoyACPredFabV"/>
    <property type="match status" value="1"/>
</dbReference>
<dbReference type="NCBIfam" id="NF010177">
    <property type="entry name" value="PRK13656.1"/>
    <property type="match status" value="1"/>
</dbReference>
<dbReference type="PANTHER" id="PTHR37480">
    <property type="entry name" value="ENOYL-[ACYL-CARRIER-PROTEIN] REDUCTASE [NADH]"/>
    <property type="match status" value="1"/>
</dbReference>
<dbReference type="PANTHER" id="PTHR37480:SF1">
    <property type="entry name" value="ENOYL-[ACYL-CARRIER-PROTEIN] REDUCTASE [NADH]"/>
    <property type="match status" value="1"/>
</dbReference>
<dbReference type="Pfam" id="PF07055">
    <property type="entry name" value="Eno-Rase_FAD_bd"/>
    <property type="match status" value="1"/>
</dbReference>
<dbReference type="Pfam" id="PF12242">
    <property type="entry name" value="Eno-Rase_NADH_b"/>
    <property type="match status" value="1"/>
</dbReference>
<dbReference type="Pfam" id="PF12241">
    <property type="entry name" value="Enoyl_reductase"/>
    <property type="match status" value="1"/>
</dbReference>
<sequence>MIIKPKIRGFICTTTHPVGCEANVKEQIAYTKAQGPIKNAPKRVLVVGSSSGYGLSSRIAAAFGGGAATIGVFFEKPGTDKKPGTAGFYNAAAFDKLAHEAGLYAKSLNGDAFSNEAKQKAIELIKQDLGQIDLVVYSLASPVRKMPDTGELVRSALKPIGETYTSTAVDTNKDVIIEASVEPATEQEIADTVTVMGGQDWELWIQALEEAGVLAEGCKTVAYSYIGTELTWPIYWDGALGRAKMDLDRAATALNEKLAAKGGTANVAVLKSVVTQASSAIPVMPLYIAMVFKKMREQGVHEGCMEQIYRMFSQRLYKEDGSAPEVDDHNRLRLDDWELRDDIQQHCRDLWPQITTENLRELTDYDMYKEEFIKLFGFGIEGIDYDADVNPEVEFDVIDIE</sequence>
<proteinExistence type="evidence at protein level"/>